<feature type="chain" id="PRO_0000291510" description="Putative glutamate--cysteine ligase 2">
    <location>
        <begin position="1"/>
        <end position="387"/>
    </location>
</feature>
<protein>
    <recommendedName>
        <fullName evidence="1">Putative glutamate--cysteine ligase 2</fullName>
        <ecNumber evidence="1">6.3.2.2</ecNumber>
    </recommendedName>
    <alternativeName>
        <fullName evidence="1">Gamma-glutamylcysteine synthetase 2</fullName>
        <shortName evidence="1">GCS 2</shortName>
        <shortName evidence="1">Gamma-GCS 2</shortName>
    </alternativeName>
</protein>
<comment type="function">
    <text evidence="1">ATP-dependent carboxylate-amine ligase which exhibits weak glutamate--cysteine ligase activity.</text>
</comment>
<comment type="catalytic activity">
    <reaction evidence="1">
        <text>L-cysteine + L-glutamate + ATP = gamma-L-glutamyl-L-cysteine + ADP + phosphate + H(+)</text>
        <dbReference type="Rhea" id="RHEA:13285"/>
        <dbReference type="ChEBI" id="CHEBI:15378"/>
        <dbReference type="ChEBI" id="CHEBI:29985"/>
        <dbReference type="ChEBI" id="CHEBI:30616"/>
        <dbReference type="ChEBI" id="CHEBI:35235"/>
        <dbReference type="ChEBI" id="CHEBI:43474"/>
        <dbReference type="ChEBI" id="CHEBI:58173"/>
        <dbReference type="ChEBI" id="CHEBI:456216"/>
        <dbReference type="EC" id="6.3.2.2"/>
    </reaction>
</comment>
<comment type="similarity">
    <text evidence="1">Belongs to the glutamate--cysteine ligase type 2 family. YbdK subfamily.</text>
</comment>
<organism>
    <name type="scientific">Pseudomonas fluorescens (strain ATCC BAA-477 / NRRL B-23932 / Pf-5)</name>
    <dbReference type="NCBI Taxonomy" id="220664"/>
    <lineage>
        <taxon>Bacteria</taxon>
        <taxon>Pseudomonadati</taxon>
        <taxon>Pseudomonadota</taxon>
        <taxon>Gammaproteobacteria</taxon>
        <taxon>Pseudomonadales</taxon>
        <taxon>Pseudomonadaceae</taxon>
        <taxon>Pseudomonas</taxon>
    </lineage>
</organism>
<name>GCS2_PSEF5</name>
<reference key="1">
    <citation type="journal article" date="2005" name="Nat. Biotechnol.">
        <title>Complete genome sequence of the plant commensal Pseudomonas fluorescens Pf-5.</title>
        <authorList>
            <person name="Paulsen I.T."/>
            <person name="Press C.M."/>
            <person name="Ravel J."/>
            <person name="Kobayashi D.Y."/>
            <person name="Myers G.S.A."/>
            <person name="Mavrodi D.V."/>
            <person name="DeBoy R.T."/>
            <person name="Seshadri R."/>
            <person name="Ren Q."/>
            <person name="Madupu R."/>
            <person name="Dodson R.J."/>
            <person name="Durkin A.S."/>
            <person name="Brinkac L.M."/>
            <person name="Daugherty S.C."/>
            <person name="Sullivan S.A."/>
            <person name="Rosovitz M.J."/>
            <person name="Gwinn M.L."/>
            <person name="Zhou L."/>
            <person name="Schneider D.J."/>
            <person name="Cartinhour S.W."/>
            <person name="Nelson W.C."/>
            <person name="Weidman J."/>
            <person name="Watkins K."/>
            <person name="Tran K."/>
            <person name="Khouri H."/>
            <person name="Pierson E.A."/>
            <person name="Pierson L.S. III"/>
            <person name="Thomashow L.S."/>
            <person name="Loper J.E."/>
        </authorList>
    </citation>
    <scope>NUCLEOTIDE SEQUENCE [LARGE SCALE GENOMIC DNA]</scope>
    <source>
        <strain>ATCC BAA-477 / NRRL B-23932 / Pf-5</strain>
    </source>
</reference>
<evidence type="ECO:0000255" key="1">
    <source>
        <dbReference type="HAMAP-Rule" id="MF_01609"/>
    </source>
</evidence>
<keyword id="KW-0067">ATP-binding</keyword>
<keyword id="KW-0436">Ligase</keyword>
<keyword id="KW-0547">Nucleotide-binding</keyword>
<proteinExistence type="inferred from homology"/>
<sequence>MSAFDPGQPQHLGIEEEYLLTDLQSRCMVAEPPPEVLRDCREALGQNFAYEMFQGQIEVASPVFDHSAQAGAYLRQVRSALDQALASHGLGFICAGSHPLADWHEQRATPQAHFRQLFNEFALAARRSVLSGLHVHAQVPAAVDRIAVMNEVLPWTPLLLALSLSSPFWQGHDSGYLSYRQVACDEWPRMGIPEYLHDHQAFDDYLRLLRGIGALGAEDNAWWGIRPALRYPTLELRMTDACPRVADAQTLAGLFAVMVRHACLLPAAGSQYTQAQRWLLKENRVQARRRGAQGRYLMSPDQAPMNLGQWLELAEQVFGDTAQALGEEPLFERARQLLRGGCSAERQLSCHAAQPAESDREARCRAVVDLLLWESRDSEPESTNAPP</sequence>
<gene>
    <name type="ordered locus">PFL_4726</name>
</gene>
<dbReference type="EC" id="6.3.2.2" evidence="1"/>
<dbReference type="EMBL" id="CP000076">
    <property type="protein sequence ID" value="AAY93957.1"/>
    <property type="molecule type" value="Genomic_DNA"/>
</dbReference>
<dbReference type="RefSeq" id="WP_011062983.1">
    <property type="nucleotide sequence ID" value="NC_004129.6"/>
</dbReference>
<dbReference type="SMR" id="Q4K7H5"/>
<dbReference type="STRING" id="220664.PFL_4726"/>
<dbReference type="KEGG" id="pfl:PFL_4726"/>
<dbReference type="PATRIC" id="fig|220664.5.peg.4835"/>
<dbReference type="eggNOG" id="COG2170">
    <property type="taxonomic scope" value="Bacteria"/>
</dbReference>
<dbReference type="HOGENOM" id="CLU_044848_0_1_6"/>
<dbReference type="Proteomes" id="UP000008540">
    <property type="component" value="Chromosome"/>
</dbReference>
<dbReference type="GO" id="GO:0005524">
    <property type="term" value="F:ATP binding"/>
    <property type="evidence" value="ECO:0007669"/>
    <property type="project" value="UniProtKB-KW"/>
</dbReference>
<dbReference type="GO" id="GO:0004357">
    <property type="term" value="F:glutamate-cysteine ligase activity"/>
    <property type="evidence" value="ECO:0007669"/>
    <property type="project" value="UniProtKB-EC"/>
</dbReference>
<dbReference type="GO" id="GO:0042398">
    <property type="term" value="P:modified amino acid biosynthetic process"/>
    <property type="evidence" value="ECO:0007669"/>
    <property type="project" value="InterPro"/>
</dbReference>
<dbReference type="Gene3D" id="3.30.590.20">
    <property type="match status" value="1"/>
</dbReference>
<dbReference type="HAMAP" id="MF_01609">
    <property type="entry name" value="Glu_cys_ligase_2"/>
    <property type="match status" value="1"/>
</dbReference>
<dbReference type="InterPro" id="IPR050141">
    <property type="entry name" value="GCL_type2/YbdK_subfam"/>
</dbReference>
<dbReference type="InterPro" id="IPR006336">
    <property type="entry name" value="GCS2"/>
</dbReference>
<dbReference type="InterPro" id="IPR014746">
    <property type="entry name" value="Gln_synth/guanido_kin_cat_dom"/>
</dbReference>
<dbReference type="InterPro" id="IPR011793">
    <property type="entry name" value="YbdK"/>
</dbReference>
<dbReference type="NCBIfam" id="TIGR02050">
    <property type="entry name" value="gshA_cyan_rel"/>
    <property type="match status" value="1"/>
</dbReference>
<dbReference type="NCBIfam" id="NF010039">
    <property type="entry name" value="PRK13515.1"/>
    <property type="match status" value="1"/>
</dbReference>
<dbReference type="PANTHER" id="PTHR36510">
    <property type="entry name" value="GLUTAMATE--CYSTEINE LIGASE 2-RELATED"/>
    <property type="match status" value="1"/>
</dbReference>
<dbReference type="PANTHER" id="PTHR36510:SF1">
    <property type="entry name" value="GLUTAMATE--CYSTEINE LIGASE 2-RELATED"/>
    <property type="match status" value="1"/>
</dbReference>
<dbReference type="Pfam" id="PF04107">
    <property type="entry name" value="GCS2"/>
    <property type="match status" value="1"/>
</dbReference>
<dbReference type="SUPFAM" id="SSF55931">
    <property type="entry name" value="Glutamine synthetase/guanido kinase"/>
    <property type="match status" value="1"/>
</dbReference>
<accession>Q4K7H5</accession>